<dbReference type="EC" id="2.3.1.234" evidence="1"/>
<dbReference type="EMBL" id="CP000474">
    <property type="protein sequence ID" value="ABM08610.1"/>
    <property type="molecule type" value="Genomic_DNA"/>
</dbReference>
<dbReference type="SMR" id="A1R8N0"/>
<dbReference type="STRING" id="290340.AAur_2883"/>
<dbReference type="KEGG" id="aau:AAur_2883"/>
<dbReference type="eggNOG" id="COG0533">
    <property type="taxonomic scope" value="Bacteria"/>
</dbReference>
<dbReference type="HOGENOM" id="CLU_023208_0_2_11"/>
<dbReference type="Proteomes" id="UP000000637">
    <property type="component" value="Chromosome"/>
</dbReference>
<dbReference type="GO" id="GO:0005737">
    <property type="term" value="C:cytoplasm"/>
    <property type="evidence" value="ECO:0007669"/>
    <property type="project" value="UniProtKB-SubCell"/>
</dbReference>
<dbReference type="GO" id="GO:0005506">
    <property type="term" value="F:iron ion binding"/>
    <property type="evidence" value="ECO:0007669"/>
    <property type="project" value="UniProtKB-UniRule"/>
</dbReference>
<dbReference type="GO" id="GO:0061711">
    <property type="term" value="F:N(6)-L-threonylcarbamoyladenine synthase activity"/>
    <property type="evidence" value="ECO:0007669"/>
    <property type="project" value="UniProtKB-EC"/>
</dbReference>
<dbReference type="GO" id="GO:0002949">
    <property type="term" value="P:tRNA threonylcarbamoyladenosine modification"/>
    <property type="evidence" value="ECO:0007669"/>
    <property type="project" value="UniProtKB-UniRule"/>
</dbReference>
<dbReference type="CDD" id="cd24133">
    <property type="entry name" value="ASKHA_NBD_TsaD_bac"/>
    <property type="match status" value="1"/>
</dbReference>
<dbReference type="FunFam" id="3.30.420.40:FF:000012">
    <property type="entry name" value="tRNA N6-adenosine threonylcarbamoyltransferase"/>
    <property type="match status" value="1"/>
</dbReference>
<dbReference type="FunFam" id="3.30.420.40:FF:000040">
    <property type="entry name" value="tRNA N6-adenosine threonylcarbamoyltransferase"/>
    <property type="match status" value="1"/>
</dbReference>
<dbReference type="Gene3D" id="3.30.420.40">
    <property type="match status" value="2"/>
</dbReference>
<dbReference type="HAMAP" id="MF_01445">
    <property type="entry name" value="TsaD"/>
    <property type="match status" value="1"/>
</dbReference>
<dbReference type="InterPro" id="IPR043129">
    <property type="entry name" value="ATPase_NBD"/>
</dbReference>
<dbReference type="InterPro" id="IPR000905">
    <property type="entry name" value="Gcp-like_dom"/>
</dbReference>
<dbReference type="InterPro" id="IPR017861">
    <property type="entry name" value="KAE1/TsaD"/>
</dbReference>
<dbReference type="InterPro" id="IPR022450">
    <property type="entry name" value="TsaD"/>
</dbReference>
<dbReference type="NCBIfam" id="TIGR00329">
    <property type="entry name" value="gcp_kae1"/>
    <property type="match status" value="1"/>
</dbReference>
<dbReference type="NCBIfam" id="TIGR03723">
    <property type="entry name" value="T6A_TsaD_YgjD"/>
    <property type="match status" value="1"/>
</dbReference>
<dbReference type="PANTHER" id="PTHR11735">
    <property type="entry name" value="TRNA N6-ADENOSINE THREONYLCARBAMOYLTRANSFERASE"/>
    <property type="match status" value="1"/>
</dbReference>
<dbReference type="PANTHER" id="PTHR11735:SF6">
    <property type="entry name" value="TRNA N6-ADENOSINE THREONYLCARBAMOYLTRANSFERASE, MITOCHONDRIAL"/>
    <property type="match status" value="1"/>
</dbReference>
<dbReference type="Pfam" id="PF00814">
    <property type="entry name" value="TsaD"/>
    <property type="match status" value="1"/>
</dbReference>
<dbReference type="PRINTS" id="PR00789">
    <property type="entry name" value="OSIALOPTASE"/>
</dbReference>
<dbReference type="SUPFAM" id="SSF53067">
    <property type="entry name" value="Actin-like ATPase domain"/>
    <property type="match status" value="1"/>
</dbReference>
<gene>
    <name evidence="1" type="primary">tsaD</name>
    <name type="synonym">gcp</name>
    <name type="ordered locus">AAur_2883</name>
</gene>
<keyword id="KW-0012">Acyltransferase</keyword>
<keyword id="KW-0963">Cytoplasm</keyword>
<keyword id="KW-0408">Iron</keyword>
<keyword id="KW-0479">Metal-binding</keyword>
<keyword id="KW-0808">Transferase</keyword>
<keyword id="KW-0819">tRNA processing</keyword>
<organism>
    <name type="scientific">Paenarthrobacter aurescens (strain TC1)</name>
    <dbReference type="NCBI Taxonomy" id="290340"/>
    <lineage>
        <taxon>Bacteria</taxon>
        <taxon>Bacillati</taxon>
        <taxon>Actinomycetota</taxon>
        <taxon>Actinomycetes</taxon>
        <taxon>Micrococcales</taxon>
        <taxon>Micrococcaceae</taxon>
        <taxon>Paenarthrobacter</taxon>
    </lineage>
</organism>
<protein>
    <recommendedName>
        <fullName evidence="1">tRNA N6-adenosine threonylcarbamoyltransferase</fullName>
        <ecNumber evidence="1">2.3.1.234</ecNumber>
    </recommendedName>
    <alternativeName>
        <fullName evidence="1">N6-L-threonylcarbamoyladenine synthase</fullName>
        <shortName evidence="1">t(6)A synthase</shortName>
    </alternativeName>
    <alternativeName>
        <fullName evidence="1">t(6)A37 threonylcarbamoyladenosine biosynthesis protein TsaD</fullName>
    </alternativeName>
    <alternativeName>
        <fullName evidence="1">tRNA threonylcarbamoyladenosine biosynthesis protein TsaD</fullName>
    </alternativeName>
</protein>
<sequence>MLGIESSCDETGVGIVRGTTLLTNTVSSSMDEHVRFGGVIPEIASRAHLDAFVPTLQESLQEAGVTLEDIDAIAVTSGPGLAGALMVGVCAAKALAVATGKPLYAINHLVAHVGVGLLDGNRVSEGKHDAVAAAGLGAGKLPENLGALLVSGGHTEILRIRSITDDVELLGSTIDDAAGEAYDKVARILGLGYPGGPAIDKLAHQGNPKSIRFPRGLTQPKYMGTAEEKGPHRYDWSFSGLKTAVARCVEQFEARGEEVPVADIAAAFQEAVVDVISSKAVLACKEHGITDVLLGGGVAANSRLRELTGQRCASAGITLHVPPLGLCTDNGAMVAALGAQLIMAGISPSGVSFAPDSSMPVTTVSVPA</sequence>
<reference key="1">
    <citation type="journal article" date="2006" name="PLoS Genet.">
        <title>Secrets of soil survival revealed by the genome sequence of Arthrobacter aurescens TC1.</title>
        <authorList>
            <person name="Mongodin E.F."/>
            <person name="Shapir N."/>
            <person name="Daugherty S.C."/>
            <person name="DeBoy R.T."/>
            <person name="Emerson J.B."/>
            <person name="Shvartzbeyn A."/>
            <person name="Radune D."/>
            <person name="Vamathevan J."/>
            <person name="Riggs F."/>
            <person name="Grinberg V."/>
            <person name="Khouri H.M."/>
            <person name="Wackett L.P."/>
            <person name="Nelson K.E."/>
            <person name="Sadowsky M.J."/>
        </authorList>
    </citation>
    <scope>NUCLEOTIDE SEQUENCE [LARGE SCALE GENOMIC DNA]</scope>
    <source>
        <strain>TC1</strain>
    </source>
</reference>
<proteinExistence type="inferred from homology"/>
<evidence type="ECO:0000255" key="1">
    <source>
        <dbReference type="HAMAP-Rule" id="MF_01445"/>
    </source>
</evidence>
<comment type="function">
    <text evidence="1">Required for the formation of a threonylcarbamoyl group on adenosine at position 37 (t(6)A37) in tRNAs that read codons beginning with adenine. Is involved in the transfer of the threonylcarbamoyl moiety of threonylcarbamoyl-AMP (TC-AMP) to the N6 group of A37, together with TsaE and TsaB. TsaD likely plays a direct catalytic role in this reaction.</text>
</comment>
<comment type="catalytic activity">
    <reaction evidence="1">
        <text>L-threonylcarbamoyladenylate + adenosine(37) in tRNA = N(6)-L-threonylcarbamoyladenosine(37) in tRNA + AMP + H(+)</text>
        <dbReference type="Rhea" id="RHEA:37059"/>
        <dbReference type="Rhea" id="RHEA-COMP:10162"/>
        <dbReference type="Rhea" id="RHEA-COMP:10163"/>
        <dbReference type="ChEBI" id="CHEBI:15378"/>
        <dbReference type="ChEBI" id="CHEBI:73682"/>
        <dbReference type="ChEBI" id="CHEBI:74411"/>
        <dbReference type="ChEBI" id="CHEBI:74418"/>
        <dbReference type="ChEBI" id="CHEBI:456215"/>
        <dbReference type="EC" id="2.3.1.234"/>
    </reaction>
</comment>
<comment type="cofactor">
    <cofactor evidence="1">
        <name>Fe(2+)</name>
        <dbReference type="ChEBI" id="CHEBI:29033"/>
    </cofactor>
    <text evidence="1">Binds 1 Fe(2+) ion per subunit.</text>
</comment>
<comment type="subcellular location">
    <subcellularLocation>
        <location evidence="1">Cytoplasm</location>
    </subcellularLocation>
</comment>
<comment type="similarity">
    <text evidence="1">Belongs to the KAE1 / TsaD family.</text>
</comment>
<feature type="chain" id="PRO_0000303257" description="tRNA N6-adenosine threonylcarbamoyltransferase">
    <location>
        <begin position="1"/>
        <end position="368"/>
    </location>
</feature>
<feature type="binding site" evidence="1">
    <location>
        <position position="108"/>
    </location>
    <ligand>
        <name>Fe cation</name>
        <dbReference type="ChEBI" id="CHEBI:24875"/>
    </ligand>
</feature>
<feature type="binding site" evidence="1">
    <location>
        <position position="112"/>
    </location>
    <ligand>
        <name>Fe cation</name>
        <dbReference type="ChEBI" id="CHEBI:24875"/>
    </ligand>
</feature>
<feature type="binding site" evidence="1">
    <location>
        <begin position="149"/>
        <end position="153"/>
    </location>
    <ligand>
        <name>substrate</name>
    </ligand>
</feature>
<feature type="binding site" evidence="1">
    <location>
        <position position="183"/>
    </location>
    <ligand>
        <name>substrate</name>
    </ligand>
</feature>
<feature type="binding site" evidence="1">
    <location>
        <position position="196"/>
    </location>
    <ligand>
        <name>substrate</name>
    </ligand>
</feature>
<feature type="binding site" evidence="1">
    <location>
        <position position="200"/>
    </location>
    <ligand>
        <name>substrate</name>
    </ligand>
</feature>
<feature type="binding site" evidence="1">
    <location>
        <position position="301"/>
    </location>
    <ligand>
        <name>substrate</name>
    </ligand>
</feature>
<feature type="binding site" evidence="1">
    <location>
        <position position="329"/>
    </location>
    <ligand>
        <name>Fe cation</name>
        <dbReference type="ChEBI" id="CHEBI:24875"/>
    </ligand>
</feature>
<name>TSAD_PAEAT</name>
<accession>A1R8N0</accession>